<accession>P09517</accession>
<protein>
    <recommendedName>
        <fullName>Uncharacterized protein ORF6</fullName>
    </recommendedName>
</protein>
<gene>
    <name type="ORF">ORF6</name>
</gene>
<feature type="chain" id="PRO_0000222431" description="Uncharacterized protein ORF6">
    <location>
        <begin position="1"/>
        <end position="63"/>
    </location>
</feature>
<proteinExistence type="predicted"/>
<keyword id="KW-1185">Reference proteome</keyword>
<reference key="1">
    <citation type="journal article" date="1988" name="Nucleic Acids Res.">
        <title>Sequence and organization of barley yellow dwarf virus genomic RNA.</title>
        <authorList>
            <person name="Miller W.A."/>
            <person name="Waterhouse P.M."/>
            <person name="Gerlach W.L."/>
        </authorList>
    </citation>
    <scope>NUCLEOTIDE SEQUENCE [GENOMIC RNA]</scope>
</reference>
<sequence>MEDLHVIAVCILALTVLSGVGAVLSCCRWCCSNPFPPSLSSVQAKDSRSVRETIKNIEGASAQ</sequence>
<organismHost>
    <name type="scientific">Avena byzantina</name>
    <dbReference type="NCBI Taxonomy" id="146531"/>
</organismHost>
<organismHost>
    <name type="scientific">Avena sativa</name>
    <name type="common">Oat</name>
    <dbReference type="NCBI Taxonomy" id="4498"/>
</organismHost>
<organismHost>
    <name type="scientific">Hordeum vulgare</name>
    <name type="common">Barley</name>
    <dbReference type="NCBI Taxonomy" id="4513"/>
</organismHost>
<organismHost>
    <name type="scientific">Lolium multiflorum</name>
    <name type="common">Italian ryegrass</name>
    <name type="synonym">Lolium perenne subsp. multiflorum</name>
    <dbReference type="NCBI Taxonomy" id="4521"/>
</organismHost>
<organismHost>
    <name type="scientific">Lolium perenne</name>
    <name type="common">Perennial ryegrass</name>
    <dbReference type="NCBI Taxonomy" id="4522"/>
</organismHost>
<organismHost>
    <name type="scientific">Oryza sativa</name>
    <name type="common">Rice</name>
    <dbReference type="NCBI Taxonomy" id="4530"/>
</organismHost>
<organismHost>
    <name type="scientific">Secale cereale</name>
    <name type="common">Rye</name>
    <dbReference type="NCBI Taxonomy" id="4550"/>
</organismHost>
<organismHost>
    <name type="scientific">Triticum aestivum</name>
    <name type="common">Wheat</name>
    <dbReference type="NCBI Taxonomy" id="4565"/>
</organismHost>
<organismHost>
    <name type="scientific">Zea mays</name>
    <name type="common">Maize</name>
    <dbReference type="NCBI Taxonomy" id="4577"/>
</organismHost>
<dbReference type="EMBL" id="X07653">
    <property type="protein sequence ID" value="CAA30496.1"/>
    <property type="molecule type" value="Genomic_RNA"/>
</dbReference>
<dbReference type="KEGG" id="vg:1492002"/>
<dbReference type="Proteomes" id="UP000006722">
    <property type="component" value="Genome"/>
</dbReference>
<dbReference type="InterPro" id="IPR009426">
    <property type="entry name" value="BYDV_Gp6"/>
</dbReference>
<dbReference type="Pfam" id="PF06380">
    <property type="entry name" value="DUF1072"/>
    <property type="match status" value="1"/>
</dbReference>
<organism>
    <name type="scientific">Barley yellow dwarf virus (isolate PAV)</name>
    <name type="common">BYDV</name>
    <dbReference type="NCBI Taxonomy" id="2169986"/>
    <lineage>
        <taxon>Viruses</taxon>
        <taxon>Riboviria</taxon>
        <taxon>Orthornavirae</taxon>
        <taxon>Kitrinoviricota</taxon>
        <taxon>Tolucaviricetes</taxon>
        <taxon>Tolivirales</taxon>
        <taxon>Tombusviridae</taxon>
        <taxon>Regressovirinae</taxon>
        <taxon>Luteovirus</taxon>
        <taxon>Luteovirus pavhordei</taxon>
    </lineage>
</organism>
<name>ORF6_BYDVP</name>